<evidence type="ECO:0000250" key="1"/>
<evidence type="ECO:0000255" key="2"/>
<evidence type="ECO:0000255" key="3">
    <source>
        <dbReference type="PROSITE-ProRule" id="PRU10040"/>
    </source>
</evidence>
<evidence type="ECO:0000256" key="4">
    <source>
        <dbReference type="SAM" id="MobiDB-lite"/>
    </source>
</evidence>
<evidence type="ECO:0000269" key="5">
    <source>
    </source>
</evidence>
<evidence type="ECO:0000303" key="6">
    <source ref="4"/>
</evidence>
<evidence type="ECO:0000305" key="7"/>
<reference key="1">
    <citation type="journal article" date="2000" name="Nature">
        <title>Sequence and analysis of chromosome 3 of the plant Arabidopsis thaliana.</title>
        <authorList>
            <person name="Salanoubat M."/>
            <person name="Lemcke K."/>
            <person name="Rieger M."/>
            <person name="Ansorge W."/>
            <person name="Unseld M."/>
            <person name="Fartmann B."/>
            <person name="Valle G."/>
            <person name="Bloecker H."/>
            <person name="Perez-Alonso M."/>
            <person name="Obermaier B."/>
            <person name="Delseny M."/>
            <person name="Boutry M."/>
            <person name="Grivell L.A."/>
            <person name="Mache R."/>
            <person name="Puigdomenech P."/>
            <person name="De Simone V."/>
            <person name="Choisne N."/>
            <person name="Artiguenave F."/>
            <person name="Robert C."/>
            <person name="Brottier P."/>
            <person name="Wincker P."/>
            <person name="Cattolico L."/>
            <person name="Weissenbach J."/>
            <person name="Saurin W."/>
            <person name="Quetier F."/>
            <person name="Schaefer M."/>
            <person name="Mueller-Auer S."/>
            <person name="Gabel C."/>
            <person name="Fuchs M."/>
            <person name="Benes V."/>
            <person name="Wurmbach E."/>
            <person name="Drzonek H."/>
            <person name="Erfle H."/>
            <person name="Jordan N."/>
            <person name="Bangert S."/>
            <person name="Wiedelmann R."/>
            <person name="Kranz H."/>
            <person name="Voss H."/>
            <person name="Holland R."/>
            <person name="Brandt P."/>
            <person name="Nyakatura G."/>
            <person name="Vezzi A."/>
            <person name="D'Angelo M."/>
            <person name="Pallavicini A."/>
            <person name="Toppo S."/>
            <person name="Simionati B."/>
            <person name="Conrad A."/>
            <person name="Hornischer K."/>
            <person name="Kauer G."/>
            <person name="Loehnert T.-H."/>
            <person name="Nordsiek G."/>
            <person name="Reichelt J."/>
            <person name="Scharfe M."/>
            <person name="Schoen O."/>
            <person name="Bargues M."/>
            <person name="Terol J."/>
            <person name="Climent J."/>
            <person name="Navarro P."/>
            <person name="Collado C."/>
            <person name="Perez-Perez A."/>
            <person name="Ottenwaelder B."/>
            <person name="Duchemin D."/>
            <person name="Cooke R."/>
            <person name="Laudie M."/>
            <person name="Berger-Llauro C."/>
            <person name="Purnelle B."/>
            <person name="Masuy D."/>
            <person name="de Haan M."/>
            <person name="Maarse A.C."/>
            <person name="Alcaraz J.-P."/>
            <person name="Cottet A."/>
            <person name="Casacuberta E."/>
            <person name="Monfort A."/>
            <person name="Argiriou A."/>
            <person name="Flores M."/>
            <person name="Liguori R."/>
            <person name="Vitale D."/>
            <person name="Mannhaupt G."/>
            <person name="Haase D."/>
            <person name="Schoof H."/>
            <person name="Rudd S."/>
            <person name="Zaccaria P."/>
            <person name="Mewes H.-W."/>
            <person name="Mayer K.F.X."/>
            <person name="Kaul S."/>
            <person name="Town C.D."/>
            <person name="Koo H.L."/>
            <person name="Tallon L.J."/>
            <person name="Jenkins J."/>
            <person name="Rooney T."/>
            <person name="Rizzo M."/>
            <person name="Walts A."/>
            <person name="Utterback T."/>
            <person name="Fujii C.Y."/>
            <person name="Shea T.P."/>
            <person name="Creasy T.H."/>
            <person name="Haas B."/>
            <person name="Maiti R."/>
            <person name="Wu D."/>
            <person name="Peterson J."/>
            <person name="Van Aken S."/>
            <person name="Pai G."/>
            <person name="Militscher J."/>
            <person name="Sellers P."/>
            <person name="Gill J.E."/>
            <person name="Feldblyum T.V."/>
            <person name="Preuss D."/>
            <person name="Lin X."/>
            <person name="Nierman W.C."/>
            <person name="Salzberg S.L."/>
            <person name="White O."/>
            <person name="Venter J.C."/>
            <person name="Fraser C.M."/>
            <person name="Kaneko T."/>
            <person name="Nakamura Y."/>
            <person name="Sato S."/>
            <person name="Kato T."/>
            <person name="Asamizu E."/>
            <person name="Sasamoto S."/>
            <person name="Kimura T."/>
            <person name="Idesawa K."/>
            <person name="Kawashima K."/>
            <person name="Kishida Y."/>
            <person name="Kiyokawa C."/>
            <person name="Kohara M."/>
            <person name="Matsumoto M."/>
            <person name="Matsuno A."/>
            <person name="Muraki A."/>
            <person name="Nakayama S."/>
            <person name="Nakazaki N."/>
            <person name="Shinpo S."/>
            <person name="Takeuchi C."/>
            <person name="Wada T."/>
            <person name="Watanabe A."/>
            <person name="Yamada M."/>
            <person name="Yasuda M."/>
            <person name="Tabata S."/>
        </authorList>
    </citation>
    <scope>NUCLEOTIDE SEQUENCE [LARGE SCALE GENOMIC DNA]</scope>
    <source>
        <strain>cv. Columbia</strain>
    </source>
</reference>
<reference key="2">
    <citation type="journal article" date="2017" name="Plant J.">
        <title>Araport11: a complete reannotation of the Arabidopsis thaliana reference genome.</title>
        <authorList>
            <person name="Cheng C.Y."/>
            <person name="Krishnakumar V."/>
            <person name="Chan A.P."/>
            <person name="Thibaud-Nissen F."/>
            <person name="Schobel S."/>
            <person name="Town C.D."/>
        </authorList>
    </citation>
    <scope>GENOME REANNOTATION</scope>
    <source>
        <strain>cv. Columbia</strain>
    </source>
</reference>
<reference key="3">
    <citation type="journal article" date="2003" name="Science">
        <title>Empirical analysis of transcriptional activity in the Arabidopsis genome.</title>
        <authorList>
            <person name="Yamada K."/>
            <person name="Lim J."/>
            <person name="Dale J.M."/>
            <person name="Chen H."/>
            <person name="Shinn P."/>
            <person name="Palm C.J."/>
            <person name="Southwick A.M."/>
            <person name="Wu H.C."/>
            <person name="Kim C.J."/>
            <person name="Nguyen M."/>
            <person name="Pham P.K."/>
            <person name="Cheuk R.F."/>
            <person name="Karlin-Newmann G."/>
            <person name="Liu S.X."/>
            <person name="Lam B."/>
            <person name="Sakano H."/>
            <person name="Wu T."/>
            <person name="Yu G."/>
            <person name="Miranda M."/>
            <person name="Quach H.L."/>
            <person name="Tripp M."/>
            <person name="Chang C.H."/>
            <person name="Lee J.M."/>
            <person name="Toriumi M.J."/>
            <person name="Chan M.M."/>
            <person name="Tang C.C."/>
            <person name="Onodera C.S."/>
            <person name="Deng J.M."/>
            <person name="Akiyama K."/>
            <person name="Ansari Y."/>
            <person name="Arakawa T."/>
            <person name="Banh J."/>
            <person name="Banno F."/>
            <person name="Bowser L."/>
            <person name="Brooks S.Y."/>
            <person name="Carninci P."/>
            <person name="Chao Q."/>
            <person name="Choy N."/>
            <person name="Enju A."/>
            <person name="Goldsmith A.D."/>
            <person name="Gurjal M."/>
            <person name="Hansen N.F."/>
            <person name="Hayashizaki Y."/>
            <person name="Johnson-Hopson C."/>
            <person name="Hsuan V.W."/>
            <person name="Iida K."/>
            <person name="Karnes M."/>
            <person name="Khan S."/>
            <person name="Koesema E."/>
            <person name="Ishida J."/>
            <person name="Jiang P.X."/>
            <person name="Jones T."/>
            <person name="Kawai J."/>
            <person name="Kamiya A."/>
            <person name="Meyers C."/>
            <person name="Nakajima M."/>
            <person name="Narusaka M."/>
            <person name="Seki M."/>
            <person name="Sakurai T."/>
            <person name="Satou M."/>
            <person name="Tamse R."/>
            <person name="Vaysberg M."/>
            <person name="Wallender E.K."/>
            <person name="Wong C."/>
            <person name="Yamamura Y."/>
            <person name="Yuan S."/>
            <person name="Shinozaki K."/>
            <person name="Davis R.W."/>
            <person name="Theologis A."/>
            <person name="Ecker J.R."/>
        </authorList>
    </citation>
    <scope>NUCLEOTIDE SEQUENCE [LARGE SCALE MRNA] (ISOFORM 1)</scope>
    <source>
        <strain>cv. Columbia</strain>
    </source>
</reference>
<reference key="4">
    <citation type="submission" date="2006-07" db="EMBL/GenBank/DDBJ databases">
        <title>Large-scale analysis of RIKEN Arabidopsis full-length (RAFL) cDNAs.</title>
        <authorList>
            <person name="Totoki Y."/>
            <person name="Seki M."/>
            <person name="Ishida J."/>
            <person name="Nakajima M."/>
            <person name="Enju A."/>
            <person name="Kamiya A."/>
            <person name="Narusaka M."/>
            <person name="Shin-i T."/>
            <person name="Nakagawa M."/>
            <person name="Sakamoto N."/>
            <person name="Oishi K."/>
            <person name="Kohara Y."/>
            <person name="Kobayashi M."/>
            <person name="Toyoda A."/>
            <person name="Sakaki Y."/>
            <person name="Sakurai T."/>
            <person name="Iida K."/>
            <person name="Akiyama K."/>
            <person name="Satou M."/>
            <person name="Toyoda T."/>
            <person name="Konagaya A."/>
            <person name="Carninci P."/>
            <person name="Kawai J."/>
            <person name="Hayashizaki Y."/>
            <person name="Shinozaki K."/>
        </authorList>
    </citation>
    <scope>NUCLEOTIDE SEQUENCE [LARGE SCALE MRNA] (ISOFORMS 1 AND 2)</scope>
    <source>
        <strain>cv. Columbia</strain>
    </source>
</reference>
<reference key="5">
    <citation type="journal article" date="2004" name="Carbohydr. Res.">
        <title>Pectin methylesterases: sequence-structural features and phylogenetic relationships.</title>
        <authorList>
            <person name="Markovic O."/>
            <person name="Janecek S."/>
        </authorList>
    </citation>
    <scope>GENE FAMILY</scope>
    <scope>NOMENCLATURE</scope>
</reference>
<reference key="6">
    <citation type="journal article" date="2006" name="Planta">
        <title>Comprehensive expression profiling of the pectin methylesterase gene family during silique development in Arabidopsis thaliana.</title>
        <authorList>
            <person name="Louvet R."/>
            <person name="Cavel E."/>
            <person name="Gutierrez L."/>
            <person name="Guenin S."/>
            <person name="Roger D."/>
            <person name="Gillet F."/>
            <person name="Guerineau F."/>
            <person name="Pelloux J."/>
        </authorList>
    </citation>
    <scope>TISSUE SPECIFICITY</scope>
    <scope>DEVELOPMENTAL STAGE</scope>
</reference>
<comment type="function">
    <text evidence="1">Acts in the modification of cell walls via demethylesterification of cell wall pectin.</text>
</comment>
<comment type="catalytic activity">
    <reaction>
        <text>[(1-&gt;4)-alpha-D-galacturonosyl methyl ester](n) + n H2O = [(1-&gt;4)-alpha-D-galacturonosyl](n) + n methanol + n H(+)</text>
        <dbReference type="Rhea" id="RHEA:22380"/>
        <dbReference type="Rhea" id="RHEA-COMP:14570"/>
        <dbReference type="Rhea" id="RHEA-COMP:14573"/>
        <dbReference type="ChEBI" id="CHEBI:15377"/>
        <dbReference type="ChEBI" id="CHEBI:15378"/>
        <dbReference type="ChEBI" id="CHEBI:17790"/>
        <dbReference type="ChEBI" id="CHEBI:140522"/>
        <dbReference type="ChEBI" id="CHEBI:140523"/>
        <dbReference type="EC" id="3.1.1.11"/>
    </reaction>
</comment>
<comment type="pathway">
    <text>Glycan metabolism; pectin degradation; 2-dehydro-3-deoxy-D-gluconate from pectin: step 1/5.</text>
</comment>
<comment type="subcellular location">
    <subcellularLocation>
        <location evidence="7">Membrane</location>
        <topology evidence="7">Single-pass membrane protein</topology>
    </subcellularLocation>
</comment>
<comment type="alternative products">
    <event type="alternative splicing"/>
    <isoform>
        <id>Q9M3B0-1</id>
        <name>1</name>
        <sequence type="displayed"/>
    </isoform>
    <isoform>
        <id>Q9M3B0-2</id>
        <name>2</name>
        <sequence type="described" ref="VSP_037091 VSP_037092"/>
    </isoform>
</comment>
<comment type="tissue specificity">
    <text evidence="5">Expressed in siliques.</text>
</comment>
<comment type="developmental stage">
    <text evidence="5">Expressed throughout silique development.</text>
</comment>
<comment type="miscellaneous">
    <text>The PMEI region may act as an autoinhibitory domain and prevent untimely PME activity during transport.</text>
</comment>
<comment type="similarity">
    <text evidence="7">In the N-terminal section; belongs to the PMEI family.</text>
</comment>
<comment type="similarity">
    <text evidence="7">In the C-terminal section; belongs to the pectinesterase family.</text>
</comment>
<comment type="sequence caution" evidence="7">
    <conflict type="erroneous initiation">
        <sequence resource="EMBL-CDS" id="AAG40402"/>
    </conflict>
</comment>
<proteinExistence type="evidence at transcript level"/>
<name>PME34_ARATH</name>
<feature type="chain" id="PRO_0000371686" description="Probable pectinesterase/pectinesterase inhibitor 34">
    <location>
        <begin position="1"/>
        <end position="598"/>
    </location>
</feature>
<feature type="transmembrane region" description="Helical" evidence="2">
    <location>
        <begin position="46"/>
        <end position="66"/>
    </location>
</feature>
<feature type="region of interest" description="Disordered" evidence="4">
    <location>
        <begin position="1"/>
        <end position="40"/>
    </location>
</feature>
<feature type="region of interest" description="Pectinesterase inhibitor 34">
    <location>
        <begin position="81"/>
        <end position="232"/>
    </location>
</feature>
<feature type="region of interest" description="Pectinesterase 34">
    <location>
        <begin position="284"/>
        <end position="582"/>
    </location>
</feature>
<feature type="compositionally biased region" description="Low complexity" evidence="4">
    <location>
        <begin position="7"/>
        <end position="23"/>
    </location>
</feature>
<feature type="compositionally biased region" description="Polar residues" evidence="4">
    <location>
        <begin position="24"/>
        <end position="36"/>
    </location>
</feature>
<feature type="active site" description="Proton donor; for pectinesterase activity" evidence="3">
    <location>
        <position position="413"/>
    </location>
</feature>
<feature type="active site" description="Nucleophile; for pectinesterase activity" evidence="3">
    <location>
        <position position="434"/>
    </location>
</feature>
<feature type="binding site" evidence="1">
    <location>
        <position position="360"/>
    </location>
    <ligand>
        <name>substrate</name>
        <note>for pectinesterase activity</note>
    </ligand>
</feature>
<feature type="binding site" evidence="1">
    <location>
        <position position="390"/>
    </location>
    <ligand>
        <name>substrate</name>
        <note>for pectinesterase activity</note>
    </ligand>
</feature>
<feature type="binding site" evidence="1">
    <location>
        <position position="502"/>
    </location>
    <ligand>
        <name>substrate</name>
        <note>for pectinesterase activity</note>
    </ligand>
</feature>
<feature type="binding site" evidence="1">
    <location>
        <position position="504"/>
    </location>
    <ligand>
        <name>substrate</name>
        <note>for pectinesterase activity</note>
    </ligand>
</feature>
<feature type="site" description="Transition state stabilizer" evidence="1">
    <location>
        <position position="412"/>
    </location>
</feature>
<feature type="disulfide bond" evidence="1">
    <location>
        <begin position="427"/>
        <end position="447"/>
    </location>
</feature>
<feature type="splice variant" id="VSP_037091" description="In isoform 2." evidence="6">
    <original>AATGAGFIARD</original>
    <variation>GEFFLTSLFLF</variation>
    <location>
        <begin position="367"/>
        <end position="377"/>
    </location>
</feature>
<feature type="splice variant" id="VSP_037092" description="In isoform 2." evidence="6">
    <location>
        <begin position="378"/>
        <end position="598"/>
    </location>
</feature>
<dbReference type="EC" id="3.1.1.11"/>
<dbReference type="EMBL" id="AL132956">
    <property type="protein sequence ID" value="CAB66401.1"/>
    <property type="molecule type" value="Genomic_DNA"/>
</dbReference>
<dbReference type="EMBL" id="CP002686">
    <property type="protein sequence ID" value="AEE78512.1"/>
    <property type="molecule type" value="Genomic_DNA"/>
</dbReference>
<dbReference type="EMBL" id="AY059834">
    <property type="protein sequence ID" value="AAL24316.1"/>
    <property type="molecule type" value="mRNA"/>
</dbReference>
<dbReference type="EMBL" id="BT008355">
    <property type="protein sequence ID" value="AAP37714.1"/>
    <property type="molecule type" value="mRNA"/>
</dbReference>
<dbReference type="EMBL" id="AF325050">
    <property type="protein sequence ID" value="AAG40402.1"/>
    <property type="status" value="ALT_INIT"/>
    <property type="molecule type" value="mRNA"/>
</dbReference>
<dbReference type="EMBL" id="AK226562">
    <property type="protein sequence ID" value="BAE98692.1"/>
    <property type="molecule type" value="mRNA"/>
</dbReference>
<dbReference type="EMBL" id="AK226672">
    <property type="protein sequence ID" value="BAE98780.1"/>
    <property type="molecule type" value="mRNA"/>
</dbReference>
<dbReference type="EMBL" id="AK229067">
    <property type="protein sequence ID" value="BAF00948.1"/>
    <property type="molecule type" value="mRNA"/>
</dbReference>
<dbReference type="PIR" id="T45827">
    <property type="entry name" value="T45827"/>
</dbReference>
<dbReference type="RefSeq" id="NP_190491.1">
    <molecule id="Q9M3B0-1"/>
    <property type="nucleotide sequence ID" value="NM_114781.5"/>
</dbReference>
<dbReference type="SMR" id="Q9M3B0"/>
<dbReference type="FunCoup" id="Q9M3B0">
    <property type="interactions" value="83"/>
</dbReference>
<dbReference type="STRING" id="3702.Q9M3B0"/>
<dbReference type="iPTMnet" id="Q9M3B0"/>
<dbReference type="PaxDb" id="3702-AT3G49220.1"/>
<dbReference type="EnsemblPlants" id="AT3G49220.1">
    <molecule id="Q9M3B0-1"/>
    <property type="protein sequence ID" value="AT3G49220.1"/>
    <property type="gene ID" value="AT3G49220"/>
</dbReference>
<dbReference type="GeneID" id="824083"/>
<dbReference type="Gramene" id="AT3G49220.1">
    <molecule id="Q9M3B0-1"/>
    <property type="protein sequence ID" value="AT3G49220.1"/>
    <property type="gene ID" value="AT3G49220"/>
</dbReference>
<dbReference type="KEGG" id="ath:AT3G49220"/>
<dbReference type="Araport" id="AT3G49220"/>
<dbReference type="TAIR" id="AT3G49220">
    <property type="gene designation" value="PME34"/>
</dbReference>
<dbReference type="eggNOG" id="ENOG502QRD0">
    <property type="taxonomic scope" value="Eukaryota"/>
</dbReference>
<dbReference type="HOGENOM" id="CLU_012243_9_1_1"/>
<dbReference type="InParanoid" id="Q9M3B0"/>
<dbReference type="PhylomeDB" id="Q9M3B0"/>
<dbReference type="BRENDA" id="3.1.1.11">
    <property type="organism ID" value="399"/>
</dbReference>
<dbReference type="UniPathway" id="UPA00545">
    <property type="reaction ID" value="UER00823"/>
</dbReference>
<dbReference type="PRO" id="PR:Q9M3B0"/>
<dbReference type="Proteomes" id="UP000006548">
    <property type="component" value="Chromosome 3"/>
</dbReference>
<dbReference type="ExpressionAtlas" id="Q9M3B0">
    <property type="expression patterns" value="baseline and differential"/>
</dbReference>
<dbReference type="GO" id="GO:0009505">
    <property type="term" value="C:plant-type cell wall"/>
    <property type="evidence" value="ECO:0000314"/>
    <property type="project" value="TAIR"/>
</dbReference>
<dbReference type="GO" id="GO:0005886">
    <property type="term" value="C:plasma membrane"/>
    <property type="evidence" value="ECO:0000314"/>
    <property type="project" value="TAIR"/>
</dbReference>
<dbReference type="GO" id="GO:0004857">
    <property type="term" value="F:enzyme inhibitor activity"/>
    <property type="evidence" value="ECO:0007669"/>
    <property type="project" value="InterPro"/>
</dbReference>
<dbReference type="GO" id="GO:0030599">
    <property type="term" value="F:pectinesterase activity"/>
    <property type="evidence" value="ECO:0000314"/>
    <property type="project" value="TAIR"/>
</dbReference>
<dbReference type="GO" id="GO:0042545">
    <property type="term" value="P:cell wall modification"/>
    <property type="evidence" value="ECO:0007669"/>
    <property type="project" value="InterPro"/>
</dbReference>
<dbReference type="GO" id="GO:0045490">
    <property type="term" value="P:pectin catabolic process"/>
    <property type="evidence" value="ECO:0007669"/>
    <property type="project" value="UniProtKB-UniPathway"/>
</dbReference>
<dbReference type="GO" id="GO:0010119">
    <property type="term" value="P:regulation of stomatal movement"/>
    <property type="evidence" value="ECO:0000315"/>
    <property type="project" value="TAIR"/>
</dbReference>
<dbReference type="CDD" id="cd15798">
    <property type="entry name" value="PMEI-like_3"/>
    <property type="match status" value="1"/>
</dbReference>
<dbReference type="FunFam" id="1.20.140.40:FF:000012">
    <property type="entry name" value="Pectinesterase"/>
    <property type="match status" value="1"/>
</dbReference>
<dbReference type="FunFam" id="2.160.20.10:FF:000001">
    <property type="entry name" value="Pectinesterase"/>
    <property type="match status" value="1"/>
</dbReference>
<dbReference type="Gene3D" id="1.20.140.40">
    <property type="entry name" value="Invertase/pectin methylesterase inhibitor family protein"/>
    <property type="match status" value="1"/>
</dbReference>
<dbReference type="Gene3D" id="2.160.20.10">
    <property type="entry name" value="Single-stranded right-handed beta-helix, Pectin lyase-like"/>
    <property type="match status" value="1"/>
</dbReference>
<dbReference type="InterPro" id="IPR035513">
    <property type="entry name" value="Invertase/methylesterase_inhib"/>
</dbReference>
<dbReference type="InterPro" id="IPR012334">
    <property type="entry name" value="Pectin_lyas_fold"/>
</dbReference>
<dbReference type="InterPro" id="IPR011050">
    <property type="entry name" value="Pectin_lyase_fold/virulence"/>
</dbReference>
<dbReference type="InterPro" id="IPR033131">
    <property type="entry name" value="Pectinesterase_Asp_AS"/>
</dbReference>
<dbReference type="InterPro" id="IPR000070">
    <property type="entry name" value="Pectinesterase_cat"/>
</dbReference>
<dbReference type="InterPro" id="IPR006501">
    <property type="entry name" value="Pectinesterase_inhib_dom"/>
</dbReference>
<dbReference type="NCBIfam" id="TIGR01614">
    <property type="entry name" value="PME_inhib"/>
    <property type="match status" value="1"/>
</dbReference>
<dbReference type="PANTHER" id="PTHR31707">
    <property type="entry name" value="PECTINESTERASE"/>
    <property type="match status" value="1"/>
</dbReference>
<dbReference type="Pfam" id="PF01095">
    <property type="entry name" value="Pectinesterase"/>
    <property type="match status" value="1"/>
</dbReference>
<dbReference type="Pfam" id="PF04043">
    <property type="entry name" value="PMEI"/>
    <property type="match status" value="1"/>
</dbReference>
<dbReference type="SMART" id="SM00856">
    <property type="entry name" value="PMEI"/>
    <property type="match status" value="1"/>
</dbReference>
<dbReference type="SUPFAM" id="SSF51126">
    <property type="entry name" value="Pectin lyase-like"/>
    <property type="match status" value="1"/>
</dbReference>
<dbReference type="SUPFAM" id="SSF101148">
    <property type="entry name" value="Plant invertase/pectin methylesterase inhibitor"/>
    <property type="match status" value="1"/>
</dbReference>
<dbReference type="PROSITE" id="PS00503">
    <property type="entry name" value="PECTINESTERASE_2"/>
    <property type="match status" value="1"/>
</dbReference>
<accession>Q9M3B0</accession>
<accession>Q0WPK1</accession>
<accession>Q0WVR8</accession>
<accession>Q9FPG7</accession>
<organism>
    <name type="scientific">Arabidopsis thaliana</name>
    <name type="common">Mouse-ear cress</name>
    <dbReference type="NCBI Taxonomy" id="3702"/>
    <lineage>
        <taxon>Eukaryota</taxon>
        <taxon>Viridiplantae</taxon>
        <taxon>Streptophyta</taxon>
        <taxon>Embryophyta</taxon>
        <taxon>Tracheophyta</taxon>
        <taxon>Spermatophyta</taxon>
        <taxon>Magnoliopsida</taxon>
        <taxon>eudicotyledons</taxon>
        <taxon>Gunneridae</taxon>
        <taxon>Pentapetalae</taxon>
        <taxon>rosids</taxon>
        <taxon>malvids</taxon>
        <taxon>Brassicales</taxon>
        <taxon>Brassicaceae</taxon>
        <taxon>Camelineae</taxon>
        <taxon>Arabidopsis</taxon>
    </lineage>
</organism>
<gene>
    <name type="primary">PME34</name>
    <name type="synonym">ARATH34</name>
    <name type="ordered locus">At3g49220</name>
    <name type="ORF">F2K15.80</name>
</gene>
<protein>
    <recommendedName>
        <fullName>Probable pectinesterase/pectinesterase inhibitor 34</fullName>
    </recommendedName>
    <domain>
        <recommendedName>
            <fullName>Pectinesterase inhibitor 34</fullName>
        </recommendedName>
        <alternativeName>
            <fullName>Pectin methylesterase inhibitor 34</fullName>
        </alternativeName>
    </domain>
    <domain>
        <recommendedName>
            <fullName>Pectinesterase 34</fullName>
            <shortName>PE 34</shortName>
            <ecNumber>3.1.1.11</ecNumber>
        </recommendedName>
        <alternativeName>
            <fullName>Pectin methylesterase 34</fullName>
            <shortName>AtPME34</shortName>
        </alternativeName>
    </domain>
</protein>
<keyword id="KW-0025">Alternative splicing</keyword>
<keyword id="KW-0063">Aspartyl esterase</keyword>
<keyword id="KW-0961">Cell wall biogenesis/degradation</keyword>
<keyword id="KW-1015">Disulfide bond</keyword>
<keyword id="KW-0378">Hydrolase</keyword>
<keyword id="KW-0472">Membrane</keyword>
<keyword id="KW-1185">Reference proteome</keyword>
<keyword id="KW-0812">Transmembrane</keyword>
<keyword id="KW-1133">Transmembrane helix</keyword>
<sequence>MGYERLGPSGATGSVTTSTTTAPILNQVSTSEQPENNNRRSKKKLVVSSIVLAISLILAAAIFAGVRSRLKLNQSVPGLARKPSQAISKACELTRFPELCVDSLMDFPGSLAASSSKDLIHVTVNMTLHHFSHALYSSASLSFVDMPPRARSAYDSCVELLDDSVDALSRALSSVVSSSAKPQDVTTWLSAALTNHDTCTEGFDGVDDGGVKDHMTAALQNLSELVSNCLAIFSASHDGDDFAGVPIQNRRLLGVEEREEKFPRWMRPKEREILEMPVSQIQADIIVSKDGNGTCKTISEAIKKAPQNSTRRIIIYVKAGRYEENNLKVGRKKINLMFVGDGKGKTVISGGKSIFDNITTFHTASFAATGAGFIARDITFENWAGPAKHQAVALRIGADHAVIYRCNIIGYQDTLYVHSNRQFFRECDIYGTVDFIFGNAAVVLQNCSIYARKPMDFQKNTITAQNRKDPNQNTGISIHASRVLAASDLQATNGSTQTYLGRPWKLFSRTVYMMSYIGGHVHTRGWLEWNTTFALDTLYYGEYLNSGPGSGLGQRVSWPGYRVINSTAEANRFTVAEFIYGSSWLPSTGVSFLAGLSI</sequence>